<protein>
    <recommendedName>
        <fullName evidence="1">UPF0122 protein SPCG_1251</fullName>
    </recommendedName>
</protein>
<organism>
    <name type="scientific">Streptococcus pneumoniae (strain CGSP14)</name>
    <dbReference type="NCBI Taxonomy" id="516950"/>
    <lineage>
        <taxon>Bacteria</taxon>
        <taxon>Bacillati</taxon>
        <taxon>Bacillota</taxon>
        <taxon>Bacilli</taxon>
        <taxon>Lactobacillales</taxon>
        <taxon>Streptococcaceae</taxon>
        <taxon>Streptococcus</taxon>
    </lineage>
</organism>
<sequence length="110" mass="13347">MEIEKTNRMNALFEFYAALLTDKQMNYIELYYADDYSLAEIAEEFGVSRQAVYDNIKRTEKILEDYEMKLHMYSDYIVRSQIFDQILERYPKDNFLQEQIEILTSIDNRE</sequence>
<comment type="function">
    <text evidence="1">Might take part in the signal recognition particle (SRP) pathway. This is inferred from the conservation of its genetic proximity to ftsY/ffh. May be a regulatory protein.</text>
</comment>
<comment type="similarity">
    <text evidence="1">Belongs to the UPF0122 family.</text>
</comment>
<gene>
    <name type="ordered locus">SPCG_1251</name>
</gene>
<name>Y1251_STRPS</name>
<reference key="1">
    <citation type="journal article" date="2009" name="BMC Genomics">
        <title>Genome evolution driven by host adaptations results in a more virulent and antimicrobial-resistant Streptococcus pneumoniae serotype 14.</title>
        <authorList>
            <person name="Ding F."/>
            <person name="Tang P."/>
            <person name="Hsu M.-H."/>
            <person name="Cui P."/>
            <person name="Hu S."/>
            <person name="Yu J."/>
            <person name="Chiu C.-H."/>
        </authorList>
    </citation>
    <scope>NUCLEOTIDE SEQUENCE [LARGE SCALE GENOMIC DNA]</scope>
    <source>
        <strain>CGSP14</strain>
    </source>
</reference>
<evidence type="ECO:0000255" key="1">
    <source>
        <dbReference type="HAMAP-Rule" id="MF_00245"/>
    </source>
</evidence>
<dbReference type="EMBL" id="CP001033">
    <property type="protein sequence ID" value="ACB90503.1"/>
    <property type="molecule type" value="Genomic_DNA"/>
</dbReference>
<dbReference type="RefSeq" id="WP_000402071.1">
    <property type="nucleotide sequence ID" value="NC_010582.1"/>
</dbReference>
<dbReference type="SMR" id="B2IQ79"/>
<dbReference type="KEGG" id="spw:SPCG_1251"/>
<dbReference type="HOGENOM" id="CLU_129218_1_0_9"/>
<dbReference type="Gene3D" id="1.10.10.10">
    <property type="entry name" value="Winged helix-like DNA-binding domain superfamily/Winged helix DNA-binding domain"/>
    <property type="match status" value="1"/>
</dbReference>
<dbReference type="HAMAP" id="MF_00245">
    <property type="entry name" value="UPF0122"/>
    <property type="match status" value="1"/>
</dbReference>
<dbReference type="InterPro" id="IPR013324">
    <property type="entry name" value="RNA_pol_sigma_r3/r4-like"/>
</dbReference>
<dbReference type="InterPro" id="IPR007394">
    <property type="entry name" value="UPF0122"/>
</dbReference>
<dbReference type="InterPro" id="IPR054831">
    <property type="entry name" value="UPF0122_fam_protein"/>
</dbReference>
<dbReference type="InterPro" id="IPR036388">
    <property type="entry name" value="WH-like_DNA-bd_sf"/>
</dbReference>
<dbReference type="NCBIfam" id="NF001066">
    <property type="entry name" value="PRK00118.1-1"/>
    <property type="match status" value="1"/>
</dbReference>
<dbReference type="NCBIfam" id="NF001068">
    <property type="entry name" value="PRK00118.1-4"/>
    <property type="match status" value="1"/>
</dbReference>
<dbReference type="NCBIfam" id="NF001070">
    <property type="entry name" value="PRK00118.1-6"/>
    <property type="match status" value="1"/>
</dbReference>
<dbReference type="NCBIfam" id="NF045758">
    <property type="entry name" value="YlxM"/>
    <property type="match status" value="1"/>
</dbReference>
<dbReference type="PANTHER" id="PTHR40083">
    <property type="entry name" value="UPF0122 PROTEIN CBO2450/CLC_2298"/>
    <property type="match status" value="1"/>
</dbReference>
<dbReference type="PANTHER" id="PTHR40083:SF1">
    <property type="entry name" value="UPF0122 PROTEIN YLXM"/>
    <property type="match status" value="1"/>
</dbReference>
<dbReference type="Pfam" id="PF04297">
    <property type="entry name" value="UPF0122"/>
    <property type="match status" value="1"/>
</dbReference>
<dbReference type="SUPFAM" id="SSF88659">
    <property type="entry name" value="Sigma3 and sigma4 domains of RNA polymerase sigma factors"/>
    <property type="match status" value="1"/>
</dbReference>
<accession>B2IQ79</accession>
<proteinExistence type="inferred from homology"/>
<feature type="chain" id="PRO_1000100819" description="UPF0122 protein SPCG_1251">
    <location>
        <begin position="1"/>
        <end position="110"/>
    </location>
</feature>